<sequence length="402" mass="44513">MGLAEGLAARMAPHLYIQEPLSAQQLKKLEEHKYSASGRSLVEPPMQVYWNWLVEKVPLWLAPNTITMVGLLLNVLSTLILVCYCPTATEGAPFWTYLLCAIGLFVYQSLDAIDGKQARRTNSSSPLGEMFDHGCDSISIVFVNLGTIAAVRLGTLPGWMFYCCFVGMFMFYCAQWQTYVCGTLKFGIIDVTELQISVTVMFLMTAVCGPELWDYEIPFTGLPMKTIPLLGIIGGTVYSCSNYFRVILSGGVGKNGSTVAGTSVLSPGLHIGLVLLLALMIYKKSTTNLFLQNPCLYTLAFGFVSAKITIKLVIAHMTKSEISLQDTAFIGPGLLFFNQYFNSFIDEYIVLWIAMVISFADLLRYCISVCLQIATHLRISVFRISSNQAAEQVQTQKQKLTD</sequence>
<accession>Q4KLV1</accession>
<evidence type="ECO:0000250" key="1">
    <source>
        <dbReference type="UniProtKB" id="Q8WUD6"/>
    </source>
</evidence>
<evidence type="ECO:0000269" key="2">
    <source>
    </source>
</evidence>
<evidence type="ECO:0000303" key="3">
    <source>
    </source>
</evidence>
<evidence type="ECO:0000305" key="4"/>
<evidence type="ECO:0000305" key="5">
    <source>
    </source>
</evidence>
<evidence type="ECO:0007744" key="6">
    <source>
        <dbReference type="PDB" id="8ERO"/>
    </source>
</evidence>
<evidence type="ECO:0007744" key="7">
    <source>
        <dbReference type="PDB" id="8ERP"/>
    </source>
</evidence>
<evidence type="ECO:0007829" key="8">
    <source>
        <dbReference type="PDB" id="8ERO"/>
    </source>
</evidence>
<comment type="function">
    <text evidence="1 2">Catalyzes the final step of de novo phosphatidylcholine (PC) synthesis, i.e. the transfer of choline phosphate from CDP-choline to the free hydroxyl of a diacylglycerol (DAG), producing a PC (PubMed:37179328). It thereby plays a central role in the formation and maintenance of vesicular membranes (By similarity). Shows a high preference for CDP-choline over CDP-ethanolamine as substrate (PubMed:37179328).</text>
</comment>
<comment type="catalytic activity">
    <reaction evidence="2">
        <text>CDP-choline + a 1,2-diacyl-sn-glycerol = a 1,2-diacyl-sn-glycero-3-phosphocholine + CMP + H(+)</text>
        <dbReference type="Rhea" id="RHEA:32939"/>
        <dbReference type="ChEBI" id="CHEBI:15378"/>
        <dbReference type="ChEBI" id="CHEBI:17815"/>
        <dbReference type="ChEBI" id="CHEBI:57643"/>
        <dbReference type="ChEBI" id="CHEBI:58779"/>
        <dbReference type="ChEBI" id="CHEBI:60377"/>
        <dbReference type="EC" id="2.7.8.2"/>
    </reaction>
    <physiologicalReaction direction="left-to-right" evidence="5">
        <dbReference type="Rhea" id="RHEA:32940"/>
    </physiologicalReaction>
</comment>
<comment type="catalytic activity">
    <reaction evidence="2">
        <text>1,2-dioctanoyl-sn-glycerol + CDP-choline = 1,2-dioctanoyl-sn-glycero-3-phosphocholine + CMP + H(+)</text>
        <dbReference type="Rhea" id="RHEA:54232"/>
        <dbReference type="ChEBI" id="CHEBI:15378"/>
        <dbReference type="ChEBI" id="CHEBI:58779"/>
        <dbReference type="ChEBI" id="CHEBI:60377"/>
        <dbReference type="ChEBI" id="CHEBI:76979"/>
        <dbReference type="ChEBI" id="CHEBI:78228"/>
    </reaction>
    <physiologicalReaction direction="left-to-right" evidence="5">
        <dbReference type="Rhea" id="RHEA:54233"/>
    </physiologicalReaction>
</comment>
<comment type="catalytic activity">
    <reaction evidence="1">
        <text>1-octadecanoyl-2-(5Z,8Z,11Z,14Z-eicosatetraenoyl)-sn-glycerol + CDP-choline = 1-octadecanoyl-2-(5Z,8Z,11Z,14Z-eicosatetraenoyl)-sn-glycero-3-phosphocholine + CMP + H(+)</text>
        <dbReference type="Rhea" id="RHEA:54344"/>
        <dbReference type="ChEBI" id="CHEBI:15378"/>
        <dbReference type="ChEBI" id="CHEBI:58779"/>
        <dbReference type="ChEBI" id="CHEBI:60377"/>
        <dbReference type="ChEBI" id="CHEBI:74965"/>
        <dbReference type="ChEBI" id="CHEBI:75728"/>
    </reaction>
    <physiologicalReaction direction="left-to-right" evidence="1">
        <dbReference type="Rhea" id="RHEA:54345"/>
    </physiologicalReaction>
</comment>
<comment type="catalytic activity">
    <reaction evidence="1">
        <text>1-hexadecanoyl-2-(9Z-octadecenoyl)-sn-glycerol + CDP-choline = 1-hexadecanoyl-2-(9Z-octadecenoyl)-sn-glycero-3-phosphocholine + CMP + H(+)</text>
        <dbReference type="Rhea" id="RHEA:54244"/>
        <dbReference type="ChEBI" id="CHEBI:15378"/>
        <dbReference type="ChEBI" id="CHEBI:58779"/>
        <dbReference type="ChEBI" id="CHEBI:60377"/>
        <dbReference type="ChEBI" id="CHEBI:73001"/>
        <dbReference type="ChEBI" id="CHEBI:75466"/>
    </reaction>
    <physiologicalReaction direction="left-to-right" evidence="1">
        <dbReference type="Rhea" id="RHEA:54245"/>
    </physiologicalReaction>
</comment>
<comment type="catalytic activity">
    <reaction evidence="1">
        <text>1-hexadecanoyl-2-(4Z,7Z,10Z,13Z,16Z,19Z-docosahexaenoyl)-sn-glycerol + CDP-choline = 1-hexadecanoyl-2-(4Z,7Z,10Z,13Z,16Z,19Z-docosahexaenoyl)-sn-glycero-3-phosphocholine + CMP + H(+)</text>
        <dbReference type="Rhea" id="RHEA:54332"/>
        <dbReference type="ChEBI" id="CHEBI:15378"/>
        <dbReference type="ChEBI" id="CHEBI:58779"/>
        <dbReference type="ChEBI" id="CHEBI:60377"/>
        <dbReference type="ChEBI" id="CHEBI:74963"/>
        <dbReference type="ChEBI" id="CHEBI:82949"/>
    </reaction>
    <physiologicalReaction direction="left-to-right" evidence="1">
        <dbReference type="Rhea" id="RHEA:54333"/>
    </physiologicalReaction>
</comment>
<comment type="cofactor">
    <cofactor evidence="2">
        <name>Mg(2+)</name>
        <dbReference type="ChEBI" id="CHEBI:18420"/>
    </cofactor>
    <cofactor evidence="2">
        <name>Mn(2+)</name>
        <dbReference type="ChEBI" id="CHEBI:29035"/>
    </cofactor>
    <text evidence="2">Is active in the presence of either Mg(2+) or Mn(2+), but not in Ca(2+) or Zn(2+). Binds 2 Mg(2+) ions per subunit.</text>
</comment>
<comment type="biophysicochemical properties">
    <kinetics>
        <KM evidence="2">18 uM for CDP-choline</KM>
        <KM evidence="2">603 uM for CDP-ethanolamine</KM>
        <Vmax evidence="2">72.8 nmol/min/mg enzyme with 1,2-dioctanoyl-sn-glycerol and CDP-choline as substrates</Vmax>
        <Vmax evidence="2">55.6 nmol/min/mg enzyme with 1,2-dioctanoyl-sn-glycerol and CDP-ethanolamine as substrates</Vmax>
    </kinetics>
</comment>
<comment type="pathway">
    <text evidence="2">Phospholipid metabolism; phosphatidylcholine biosynthesis; phosphatidylcholine from phosphocholine: step 2/2.</text>
</comment>
<comment type="subunit">
    <text evidence="2">Homodimer.</text>
</comment>
<comment type="subcellular location">
    <subcellularLocation>
        <location evidence="1">Golgi apparatus membrane</location>
        <topology evidence="1">Multi-pass membrane protein</topology>
    </subcellularLocation>
</comment>
<comment type="similarity">
    <text evidence="4">Belongs to the CDP-alcohol phosphatidyltransferase class-I family.</text>
</comment>
<proteinExistence type="evidence at protein level"/>
<dbReference type="EC" id="2.7.8.2" evidence="2"/>
<dbReference type="EMBL" id="BC098988">
    <property type="protein sequence ID" value="AAH98988.1"/>
    <property type="molecule type" value="mRNA"/>
</dbReference>
<dbReference type="RefSeq" id="NP_001089575.1">
    <property type="nucleotide sequence ID" value="NM_001096106.1"/>
</dbReference>
<dbReference type="PDB" id="8ERO">
    <property type="method" value="EM"/>
    <property type="resolution" value="3.20 A"/>
    <property type="chains" value="A/B=1-402"/>
</dbReference>
<dbReference type="PDB" id="8ERP">
    <property type="method" value="EM"/>
    <property type="resolution" value="3.70 A"/>
    <property type="chains" value="A/B=1-402"/>
</dbReference>
<dbReference type="PDBsum" id="8ERO"/>
<dbReference type="PDBsum" id="8ERP"/>
<dbReference type="EMDB" id="EMD-28556"/>
<dbReference type="EMDB" id="EMD-28557"/>
<dbReference type="SMR" id="Q4KLV1"/>
<dbReference type="DNASU" id="734631"/>
<dbReference type="GeneID" id="734631"/>
<dbReference type="KEGG" id="xla:734631"/>
<dbReference type="AGR" id="Xenbase:XB-GENE-6489129"/>
<dbReference type="CTD" id="734631"/>
<dbReference type="Xenbase" id="XB-GENE-6489129">
    <property type="gene designation" value="chpt1.L"/>
</dbReference>
<dbReference type="OrthoDB" id="196717at2759"/>
<dbReference type="UniPathway" id="UPA00753">
    <property type="reaction ID" value="UER00740"/>
</dbReference>
<dbReference type="Proteomes" id="UP000186698">
    <property type="component" value="Chromosome 3L"/>
</dbReference>
<dbReference type="Bgee" id="734631">
    <property type="expression patterns" value="Expressed in egg cell and 19 other cell types or tissues"/>
</dbReference>
<dbReference type="GO" id="GO:0005789">
    <property type="term" value="C:endoplasmic reticulum membrane"/>
    <property type="evidence" value="ECO:0000318"/>
    <property type="project" value="GO_Central"/>
</dbReference>
<dbReference type="GO" id="GO:0005794">
    <property type="term" value="C:Golgi apparatus"/>
    <property type="evidence" value="ECO:0000318"/>
    <property type="project" value="GO_Central"/>
</dbReference>
<dbReference type="GO" id="GO:0000139">
    <property type="term" value="C:Golgi membrane"/>
    <property type="evidence" value="ECO:0007669"/>
    <property type="project" value="UniProtKB-SubCell"/>
</dbReference>
<dbReference type="GO" id="GO:0004142">
    <property type="term" value="F:diacylglycerol cholinephosphotransferase activity"/>
    <property type="evidence" value="ECO:0000318"/>
    <property type="project" value="GO_Central"/>
</dbReference>
<dbReference type="GO" id="GO:0046872">
    <property type="term" value="F:metal ion binding"/>
    <property type="evidence" value="ECO:0007669"/>
    <property type="project" value="UniProtKB-KW"/>
</dbReference>
<dbReference type="FunFam" id="1.20.120.1760:FF:000002">
    <property type="entry name" value="Choline/ethanolamine phosphotransferase 1"/>
    <property type="match status" value="1"/>
</dbReference>
<dbReference type="Gene3D" id="1.20.120.1760">
    <property type="match status" value="1"/>
</dbReference>
<dbReference type="InterPro" id="IPR000462">
    <property type="entry name" value="CDP-OH_P_trans"/>
</dbReference>
<dbReference type="InterPro" id="IPR043130">
    <property type="entry name" value="CDP-OH_PTrfase_TM_dom"/>
</dbReference>
<dbReference type="InterPro" id="IPR048254">
    <property type="entry name" value="CDP_ALCOHOL_P_TRANSF_CS"/>
</dbReference>
<dbReference type="InterPro" id="IPR014472">
    <property type="entry name" value="CHOPT"/>
</dbReference>
<dbReference type="PANTHER" id="PTHR10414:SF32">
    <property type="entry name" value="CHOLINEPHOSPHOTRANSFERASE 1"/>
    <property type="match status" value="1"/>
</dbReference>
<dbReference type="PANTHER" id="PTHR10414">
    <property type="entry name" value="ETHANOLAMINEPHOSPHOTRANSFERASE"/>
    <property type="match status" value="1"/>
</dbReference>
<dbReference type="Pfam" id="PF01066">
    <property type="entry name" value="CDP-OH_P_transf"/>
    <property type="match status" value="1"/>
</dbReference>
<dbReference type="PIRSF" id="PIRSF015665">
    <property type="entry name" value="CHOPT"/>
    <property type="match status" value="1"/>
</dbReference>
<dbReference type="PROSITE" id="PS00379">
    <property type="entry name" value="CDP_ALCOHOL_P_TRANSF"/>
    <property type="match status" value="1"/>
</dbReference>
<protein>
    <recommendedName>
        <fullName evidence="3">Cholinephosphotransferase 1</fullName>
        <ecNumber evidence="2">2.7.8.2</ecNumber>
    </recommendedName>
    <alternativeName>
        <fullName>Diacylglycerol cholinephosphotransferase 1</fullName>
    </alternativeName>
    <alternativeName>
        <fullName evidence="3">xlCHPT1</fullName>
    </alternativeName>
</protein>
<name>CHPT1_XENLA</name>
<feature type="chain" id="PRO_0000289257" description="Cholinephosphotransferase 1">
    <location>
        <begin position="1"/>
        <end position="402"/>
    </location>
</feature>
<feature type="topological domain" description="Cytoplasmic" evidence="5">
    <location>
        <begin position="1"/>
        <end position="62"/>
    </location>
</feature>
<feature type="transmembrane region" description="Helical; Name=1" evidence="2">
    <location>
        <begin position="63"/>
        <end position="83"/>
    </location>
</feature>
<feature type="topological domain" description="Lumenal" evidence="5">
    <location>
        <begin position="84"/>
        <end position="93"/>
    </location>
</feature>
<feature type="transmembrane region" description="Helical; Name=2" evidence="2">
    <location>
        <begin position="94"/>
        <end position="118"/>
    </location>
</feature>
<feature type="topological domain" description="Cytoplasmic" evidence="5">
    <location>
        <begin position="119"/>
        <end position="125"/>
    </location>
</feature>
<feature type="transmembrane region" description="Helical; Name=3" evidence="2">
    <location>
        <begin position="126"/>
        <end position="150"/>
    </location>
</feature>
<feature type="topological domain" description="Lumenal" evidence="5">
    <location>
        <begin position="151"/>
        <end position="160"/>
    </location>
</feature>
<feature type="transmembrane region" description="Helical; Name=4" evidence="2">
    <location>
        <begin position="161"/>
        <end position="179"/>
    </location>
</feature>
<feature type="topological domain" description="Cytoplasmic" evidence="5">
    <location>
        <begin position="180"/>
        <end position="190"/>
    </location>
</feature>
<feature type="transmembrane region" description="Helical; Name=5" evidence="2">
    <location>
        <begin position="191"/>
        <end position="207"/>
    </location>
</feature>
<feature type="topological domain" description="Lumenal" evidence="5">
    <location>
        <begin position="208"/>
        <end position="222"/>
    </location>
</feature>
<feature type="transmembrane region" description="Helical; Name=6" evidence="2">
    <location>
        <begin position="223"/>
        <end position="248"/>
    </location>
</feature>
<feature type="topological domain" description="Cytoplasmic" evidence="5">
    <location>
        <begin position="249"/>
        <end position="265"/>
    </location>
</feature>
<feature type="transmembrane region" description="Helical; Name=7" evidence="2">
    <location>
        <begin position="266"/>
        <end position="281"/>
    </location>
</feature>
<feature type="topological domain" description="Lumenal" evidence="5">
    <location>
        <begin position="282"/>
        <end position="293"/>
    </location>
</feature>
<feature type="transmembrane region" description="Helical; Name=8" evidence="2">
    <location>
        <begin position="294"/>
        <end position="316"/>
    </location>
</feature>
<feature type="topological domain" description="Cytoplasmic" evidence="5">
    <location>
        <begin position="317"/>
        <end position="329"/>
    </location>
</feature>
<feature type="transmembrane region" description="Helical; Name=9" evidence="2">
    <location>
        <begin position="330"/>
        <end position="339"/>
    </location>
</feature>
<feature type="topological domain" description="Lumenal" evidence="5">
    <location>
        <begin position="340"/>
        <end position="346"/>
    </location>
</feature>
<feature type="transmembrane region" description="Helical; Name=10" evidence="2">
    <location>
        <begin position="347"/>
        <end position="376"/>
    </location>
</feature>
<feature type="topological domain" description="Cytoplasmic" evidence="5">
    <location>
        <begin position="377"/>
        <end position="402"/>
    </location>
</feature>
<feature type="active site" description="Proton acceptor" evidence="5">
    <location>
        <position position="133"/>
    </location>
</feature>
<feature type="binding site" evidence="2 7">
    <location>
        <position position="64"/>
    </location>
    <ligand>
        <name>CDP-choline</name>
        <dbReference type="ChEBI" id="CHEBI:58779"/>
    </ligand>
</feature>
<feature type="binding site" evidence="2 7">
    <location>
        <position position="111"/>
    </location>
    <ligand>
        <name>Mg(2+)</name>
        <dbReference type="ChEBI" id="CHEBI:18420"/>
        <label>1</label>
    </ligand>
</feature>
<feature type="binding site" evidence="2 7">
    <location>
        <position position="111"/>
    </location>
    <ligand>
        <name>Mg(2+)</name>
        <dbReference type="ChEBI" id="CHEBI:18420"/>
        <label>2</label>
    </ligand>
</feature>
<feature type="binding site" evidence="2 7">
    <location>
        <position position="114"/>
    </location>
    <ligand>
        <name>Mg(2+)</name>
        <dbReference type="ChEBI" id="CHEBI:18420"/>
        <label>1</label>
    </ligand>
</feature>
<feature type="binding site" evidence="2 7">
    <location>
        <position position="119"/>
    </location>
    <ligand>
        <name>CDP-choline</name>
        <dbReference type="ChEBI" id="CHEBI:58779"/>
    </ligand>
</feature>
<feature type="binding site" evidence="2 7">
    <location>
        <position position="132"/>
    </location>
    <ligand>
        <name>Mg(2+)</name>
        <dbReference type="ChEBI" id="CHEBI:18420"/>
        <label>1</label>
    </ligand>
</feature>
<feature type="binding site" evidence="2 7">
    <location>
        <position position="132"/>
    </location>
    <ligand>
        <name>Mg(2+)</name>
        <dbReference type="ChEBI" id="CHEBI:18420"/>
        <label>2</label>
    </ligand>
</feature>
<feature type="binding site" evidence="2 7">
    <location>
        <position position="136"/>
    </location>
    <ligand>
        <name>Mg(2+)</name>
        <dbReference type="ChEBI" id="CHEBI:18420"/>
        <label>2</label>
    </ligand>
</feature>
<feature type="site" description="Increases basicity of active site His" evidence="5">
    <location>
        <position position="129"/>
    </location>
</feature>
<feature type="mutagenesis site" description="Reduces the enzymatic activity to about 35% of that of the wild type." evidence="2">
    <original>Y</original>
    <variation>A</variation>
    <location>
        <position position="34"/>
    </location>
</feature>
<feature type="mutagenesis site" description="Reduces the enzymatic activity to about 25% of that of the wild type." evidence="2">
    <original>E</original>
    <variation>L</variation>
    <location>
        <position position="43"/>
    </location>
</feature>
<feature type="mutagenesis site" description="Reduces the enzymatic activity to about 55% of that of the wild type." evidence="2">
    <original>W</original>
    <variation>A</variation>
    <location>
        <position position="50"/>
    </location>
</feature>
<feature type="mutagenesis site" description="Reduces the enzymatic activity to about 20% of that of the wild type." evidence="2">
    <original>N</original>
    <variation>V</variation>
    <location>
        <position position="64"/>
    </location>
</feature>
<feature type="mutagenesis site" description="Reduces the enzymatic activity to about 15% of that of the wild type." evidence="2">
    <original>D</original>
    <variation>A</variation>
    <location>
        <position position="111"/>
    </location>
</feature>
<feature type="mutagenesis site" description="Reduces the enzymatic activity to about 20% of that of the wild type." evidence="2">
    <original>R</original>
    <variation>L</variation>
    <location>
        <position position="119"/>
    </location>
</feature>
<feature type="mutagenesis site" description="Reduces the enzymatic activity to about 15% of that of the wild type." evidence="2">
    <original>E</original>
    <variation>A</variation>
    <location>
        <position position="129"/>
    </location>
</feature>
<feature type="mutagenesis site" description="Reduces the enzymatic activity to about 20% of that of the wild type." evidence="2">
    <original>D</original>
    <variation>A</variation>
    <location>
        <position position="132"/>
    </location>
</feature>
<feature type="mutagenesis site" description="Almost completely abolishes the enzymatic activity." evidence="2">
    <original>H</original>
    <variation>A</variation>
    <location>
        <position position="133"/>
    </location>
</feature>
<feature type="mutagenesis site" description="Reduces the enzymatic activity to about 15% of that of the wild type." evidence="2">
    <original>D</original>
    <variation>A</variation>
    <location>
        <position position="136"/>
    </location>
</feature>
<feature type="mutagenesis site" description="Reduces the enzymatic activity to about 45% of that of the wild type." evidence="2">
    <original>F</original>
    <variation>A</variation>
    <location>
        <position position="186"/>
    </location>
</feature>
<feature type="helix" evidence="8">
    <location>
        <begin position="23"/>
        <end position="29"/>
    </location>
</feature>
<feature type="strand" evidence="8">
    <location>
        <begin position="36"/>
        <end position="38"/>
    </location>
</feature>
<feature type="helix" evidence="8">
    <location>
        <begin position="43"/>
        <end position="54"/>
    </location>
</feature>
<feature type="helix" evidence="8">
    <location>
        <begin position="63"/>
        <end position="84"/>
    </location>
</feature>
<feature type="helix" evidence="8">
    <location>
        <begin position="86"/>
        <end position="88"/>
    </location>
</feature>
<feature type="helix" evidence="8">
    <location>
        <begin position="94"/>
        <end position="119"/>
    </location>
</feature>
<feature type="turn" evidence="8">
    <location>
        <begin position="120"/>
        <end position="122"/>
    </location>
</feature>
<feature type="helix" evidence="8">
    <location>
        <begin position="126"/>
        <end position="151"/>
    </location>
</feature>
<feature type="turn" evidence="8">
    <location>
        <begin position="152"/>
        <end position="154"/>
    </location>
</feature>
<feature type="helix" evidence="8">
    <location>
        <begin position="157"/>
        <end position="159"/>
    </location>
</feature>
<feature type="helix" evidence="8">
    <location>
        <begin position="161"/>
        <end position="180"/>
    </location>
</feature>
<feature type="strand" evidence="8">
    <location>
        <begin position="181"/>
        <end position="186"/>
    </location>
</feature>
<feature type="helix" evidence="8">
    <location>
        <begin position="191"/>
        <end position="208"/>
    </location>
</feature>
<feature type="helix" evidence="8">
    <location>
        <begin position="210"/>
        <end position="214"/>
    </location>
</feature>
<feature type="helix" evidence="8">
    <location>
        <begin position="226"/>
        <end position="248"/>
    </location>
</feature>
<feature type="strand" evidence="8">
    <location>
        <begin position="253"/>
        <end position="257"/>
    </location>
</feature>
<feature type="helix" evidence="8">
    <location>
        <begin position="267"/>
        <end position="283"/>
    </location>
</feature>
<feature type="helix" evidence="8">
    <location>
        <begin position="289"/>
        <end position="292"/>
    </location>
</feature>
<feature type="helix" evidence="8">
    <location>
        <begin position="294"/>
        <end position="317"/>
    </location>
</feature>
<feature type="helix" evidence="8">
    <location>
        <begin position="330"/>
        <end position="340"/>
    </location>
</feature>
<feature type="helix" evidence="8">
    <location>
        <begin position="349"/>
        <end position="377"/>
    </location>
</feature>
<keyword id="KW-0002">3D-structure</keyword>
<keyword id="KW-0333">Golgi apparatus</keyword>
<keyword id="KW-0444">Lipid biosynthesis</keyword>
<keyword id="KW-0443">Lipid metabolism</keyword>
<keyword id="KW-0460">Magnesium</keyword>
<keyword id="KW-0464">Manganese</keyword>
<keyword id="KW-0472">Membrane</keyword>
<keyword id="KW-0479">Metal-binding</keyword>
<keyword id="KW-0594">Phospholipid biosynthesis</keyword>
<keyword id="KW-1208">Phospholipid metabolism</keyword>
<keyword id="KW-1185">Reference proteome</keyword>
<keyword id="KW-0808">Transferase</keyword>
<keyword id="KW-0812">Transmembrane</keyword>
<keyword id="KW-1133">Transmembrane helix</keyword>
<organism>
    <name type="scientific">Xenopus laevis</name>
    <name type="common">African clawed frog</name>
    <dbReference type="NCBI Taxonomy" id="8355"/>
    <lineage>
        <taxon>Eukaryota</taxon>
        <taxon>Metazoa</taxon>
        <taxon>Chordata</taxon>
        <taxon>Craniata</taxon>
        <taxon>Vertebrata</taxon>
        <taxon>Euteleostomi</taxon>
        <taxon>Amphibia</taxon>
        <taxon>Batrachia</taxon>
        <taxon>Anura</taxon>
        <taxon>Pipoidea</taxon>
        <taxon>Pipidae</taxon>
        <taxon>Xenopodinae</taxon>
        <taxon>Xenopus</taxon>
        <taxon>Xenopus</taxon>
    </lineage>
</organism>
<gene>
    <name type="primary">chpt1</name>
</gene>
<reference key="1">
    <citation type="submission" date="2005-07" db="EMBL/GenBank/DDBJ databases">
        <authorList>
            <consortium name="NIH - Xenopus Gene Collection (XGC) project"/>
        </authorList>
    </citation>
    <scope>NUCLEOTIDE SEQUENCE [LARGE SCALE MRNA]</scope>
    <source>
        <tissue>Oocyte</tissue>
    </source>
</reference>
<reference evidence="6 7" key="2">
    <citation type="journal article" date="2023" name="Nat. Commun.">
        <title>Structure of a eukaryotic cholinephosphotransferase-1 reveals mechanisms of substrate recognition and catalysis.</title>
        <authorList>
            <person name="Wang L."/>
            <person name="Zhou M."/>
        </authorList>
    </citation>
    <scope>STRUCTURE BY ELECTRON MICROSCOPY (3.2 ANGSTROMS) IN COMPLEXES WITH MG(2+); CDP-CHOLINE AND CDP</scope>
    <scope>FUNCTION</scope>
    <scope>CATALYTIC ACTIVITY</scope>
    <scope>BIOPHYSICOCHEMICAL PROPERTIES</scope>
    <scope>SUBSTRATE SPECIFICITY</scope>
    <scope>COFACTOR</scope>
    <scope>SUBUNIT</scope>
    <scope>PATHWAY</scope>
    <scope>REACTION MECHANISM</scope>
    <scope>ACTIVE SITE</scope>
    <scope>MUTAGENESIS OF TYR-34; GLU-43; TRP-50; ASN-64; ASP-111; ARG-119; GLU-129; ASP-132; HIS-133; ASP-136 AND PHE-186</scope>
</reference>